<proteinExistence type="predicted"/>
<accession>Q573F8</accession>
<organismHost>
    <name type="scientific">Acidianus sp. F28</name>
    <dbReference type="NCBI Taxonomy" id="315458"/>
</organismHost>
<organism>
    <name type="scientific">Acidianus filamentous virus 2 (isolate Italy/Pozzuoli)</name>
    <name type="common">AFV-2</name>
    <dbReference type="NCBI Taxonomy" id="654910"/>
    <lineage>
        <taxon>Viruses</taxon>
        <taxon>Adnaviria</taxon>
        <taxon>Zilligvirae</taxon>
        <taxon>Taleaviricota</taxon>
        <taxon>Tokiviricetes</taxon>
        <taxon>Ligamenvirales</taxon>
        <taxon>Lipothrixviridae</taxon>
        <taxon>Deltalipothrixvirus</taxon>
        <taxon>Acidianus filamentous virus 2</taxon>
    </lineage>
</organism>
<sequence length="108" mass="12517">MIDEYLKKNGIKFTQRQYNDKIKYTLLTPVASKISDVLKTVTEMMKFVDNNEYVVVPIAKAGDYMVELSLSQSSMSWRIAKKMTYIDVTDKDIDVLMNVLQKLKNVKL</sequence>
<dbReference type="EMBL" id="AJ854042">
    <property type="protein sequence ID" value="CAH69398.1"/>
    <property type="molecule type" value="Genomic_DNA"/>
</dbReference>
<dbReference type="RefSeq" id="YP_001496936.1">
    <property type="nucleotide sequence ID" value="NC_009884.1"/>
</dbReference>
<dbReference type="KEGG" id="vg:5656075"/>
<dbReference type="Proteomes" id="UP000006364">
    <property type="component" value="Genome"/>
</dbReference>
<reference key="1">
    <citation type="journal article" date="2005" name="J. Bacteriol.">
        <title>Structure and genome organization of AFV2, a novel archaeal lipothrixvirus with unusual terminal and core structures.</title>
        <authorList>
            <person name="Haring M."/>
            <person name="Vestergaard G."/>
            <person name="Brugger K."/>
            <person name="Rachel R."/>
            <person name="Garrett R.A."/>
            <person name="Prangishvili D."/>
        </authorList>
    </citation>
    <scope>NUCLEOTIDE SEQUENCE [GENOMIC DNA]</scope>
</reference>
<gene>
    <name type="ORF">ORF108</name>
</gene>
<feature type="chain" id="PRO_0000384502" description="Uncharacterized protein ORF108">
    <location>
        <begin position="1"/>
        <end position="108"/>
    </location>
</feature>
<protein>
    <recommendedName>
        <fullName>Uncharacterized protein ORF108</fullName>
    </recommendedName>
</protein>
<name>Y108_AFV2P</name>
<keyword id="KW-1185">Reference proteome</keyword>